<keyword id="KW-0028">Amino-acid biosynthesis</keyword>
<keyword id="KW-0057">Aromatic amino acid biosynthesis</keyword>
<keyword id="KW-0210">Decarboxylase</keyword>
<keyword id="KW-0456">Lyase</keyword>
<keyword id="KW-1185">Reference proteome</keyword>
<keyword id="KW-0822">Tryptophan biosynthesis</keyword>
<reference key="1">
    <citation type="journal article" date="2005" name="Arch. Microbiol.">
        <title>The genome sequence of an anaerobic aromatic-degrading denitrifying bacterium, strain EbN1.</title>
        <authorList>
            <person name="Rabus R."/>
            <person name="Kube M."/>
            <person name="Heider J."/>
            <person name="Beck A."/>
            <person name="Heitmann K."/>
            <person name="Widdel F."/>
            <person name="Reinhardt R."/>
        </authorList>
    </citation>
    <scope>NUCLEOTIDE SEQUENCE [LARGE SCALE GENOMIC DNA]</scope>
    <source>
        <strain>DSM 19018 / LMG 30748 / EbN1</strain>
    </source>
</reference>
<protein>
    <recommendedName>
        <fullName evidence="1">Indole-3-glycerol phosphate synthase</fullName>
        <shortName evidence="1">IGPS</shortName>
        <ecNumber evidence="1">4.1.1.48</ecNumber>
    </recommendedName>
</protein>
<organism>
    <name type="scientific">Aromatoleum aromaticum (strain DSM 19018 / LMG 30748 / EbN1)</name>
    <name type="common">Azoarcus sp. (strain EbN1)</name>
    <dbReference type="NCBI Taxonomy" id="76114"/>
    <lineage>
        <taxon>Bacteria</taxon>
        <taxon>Pseudomonadati</taxon>
        <taxon>Pseudomonadota</taxon>
        <taxon>Betaproteobacteria</taxon>
        <taxon>Rhodocyclales</taxon>
        <taxon>Rhodocyclaceae</taxon>
        <taxon>Aromatoleum</taxon>
    </lineage>
</organism>
<name>TRPC_AROAE</name>
<sequence length="262" mass="27658">MSDILDKILSVKRDEVAAGSVARPLAQVRAEVEALAAPRNFVGAIRAKIAAGDAAVIAEIKKASPSKGVIREDFRPAEIALQYERGGAACLSVLTDRQFFQGAPAYLQAARAACSLPVLRKDFLVDPWQVYEARAMGADAVLLIVAALDLAAMRDMEAVAGSLGMAVLVEAHDAAELDVALQLSTPLVGINNRNLRTFDVSLQTTLDLLARVPAGRIVVTESGILAPADVALMRANAVNAFLVGEAFMRVPDPGEGLRSLFG</sequence>
<feature type="chain" id="PRO_1000018434" description="Indole-3-glycerol phosphate synthase">
    <location>
        <begin position="1"/>
        <end position="262"/>
    </location>
</feature>
<accession>Q5P2G1</accession>
<evidence type="ECO:0000255" key="1">
    <source>
        <dbReference type="HAMAP-Rule" id="MF_00134"/>
    </source>
</evidence>
<proteinExistence type="inferred from homology"/>
<gene>
    <name evidence="1" type="primary">trpC</name>
    <name type="ordered locus">AZOSEA23780</name>
    <name type="ORF">ebA4201</name>
</gene>
<comment type="catalytic activity">
    <reaction evidence="1">
        <text>1-(2-carboxyphenylamino)-1-deoxy-D-ribulose 5-phosphate + H(+) = (1S,2R)-1-C-(indol-3-yl)glycerol 3-phosphate + CO2 + H2O</text>
        <dbReference type="Rhea" id="RHEA:23476"/>
        <dbReference type="ChEBI" id="CHEBI:15377"/>
        <dbReference type="ChEBI" id="CHEBI:15378"/>
        <dbReference type="ChEBI" id="CHEBI:16526"/>
        <dbReference type="ChEBI" id="CHEBI:58613"/>
        <dbReference type="ChEBI" id="CHEBI:58866"/>
        <dbReference type="EC" id="4.1.1.48"/>
    </reaction>
</comment>
<comment type="pathway">
    <text evidence="1">Amino-acid biosynthesis; L-tryptophan biosynthesis; L-tryptophan from chorismate: step 4/5.</text>
</comment>
<comment type="similarity">
    <text evidence="1">Belongs to the TrpC family.</text>
</comment>
<dbReference type="EC" id="4.1.1.48" evidence="1"/>
<dbReference type="EMBL" id="CR555306">
    <property type="protein sequence ID" value="CAI08503.1"/>
    <property type="molecule type" value="Genomic_DNA"/>
</dbReference>
<dbReference type="RefSeq" id="WP_011238190.1">
    <property type="nucleotide sequence ID" value="NC_006513.1"/>
</dbReference>
<dbReference type="SMR" id="Q5P2G1"/>
<dbReference type="STRING" id="76114.ebA4201"/>
<dbReference type="KEGG" id="eba:ebA4201"/>
<dbReference type="eggNOG" id="COG0134">
    <property type="taxonomic scope" value="Bacteria"/>
</dbReference>
<dbReference type="HOGENOM" id="CLU_034247_2_0_4"/>
<dbReference type="OrthoDB" id="9804217at2"/>
<dbReference type="UniPathway" id="UPA00035">
    <property type="reaction ID" value="UER00043"/>
</dbReference>
<dbReference type="Proteomes" id="UP000006552">
    <property type="component" value="Chromosome"/>
</dbReference>
<dbReference type="GO" id="GO:0004425">
    <property type="term" value="F:indole-3-glycerol-phosphate synthase activity"/>
    <property type="evidence" value="ECO:0007669"/>
    <property type="project" value="UniProtKB-UniRule"/>
</dbReference>
<dbReference type="GO" id="GO:0004640">
    <property type="term" value="F:phosphoribosylanthranilate isomerase activity"/>
    <property type="evidence" value="ECO:0007669"/>
    <property type="project" value="TreeGrafter"/>
</dbReference>
<dbReference type="GO" id="GO:0000162">
    <property type="term" value="P:L-tryptophan biosynthetic process"/>
    <property type="evidence" value="ECO:0007669"/>
    <property type="project" value="UniProtKB-UniRule"/>
</dbReference>
<dbReference type="CDD" id="cd00331">
    <property type="entry name" value="IGPS"/>
    <property type="match status" value="1"/>
</dbReference>
<dbReference type="FunFam" id="3.20.20.70:FF:000024">
    <property type="entry name" value="Indole-3-glycerol phosphate synthase"/>
    <property type="match status" value="1"/>
</dbReference>
<dbReference type="Gene3D" id="3.20.20.70">
    <property type="entry name" value="Aldolase class I"/>
    <property type="match status" value="1"/>
</dbReference>
<dbReference type="HAMAP" id="MF_00134_B">
    <property type="entry name" value="IGPS_B"/>
    <property type="match status" value="1"/>
</dbReference>
<dbReference type="InterPro" id="IPR013785">
    <property type="entry name" value="Aldolase_TIM"/>
</dbReference>
<dbReference type="InterPro" id="IPR045186">
    <property type="entry name" value="Indole-3-glycerol_P_synth"/>
</dbReference>
<dbReference type="InterPro" id="IPR013798">
    <property type="entry name" value="Indole-3-glycerol_P_synth_dom"/>
</dbReference>
<dbReference type="InterPro" id="IPR001468">
    <property type="entry name" value="Indole-3-GlycerolPSynthase_CS"/>
</dbReference>
<dbReference type="InterPro" id="IPR011060">
    <property type="entry name" value="RibuloseP-bd_barrel"/>
</dbReference>
<dbReference type="NCBIfam" id="NF001370">
    <property type="entry name" value="PRK00278.1-2"/>
    <property type="match status" value="1"/>
</dbReference>
<dbReference type="NCBIfam" id="NF001373">
    <property type="entry name" value="PRK00278.1-6"/>
    <property type="match status" value="1"/>
</dbReference>
<dbReference type="NCBIfam" id="NF001377">
    <property type="entry name" value="PRK00278.2-4"/>
    <property type="match status" value="1"/>
</dbReference>
<dbReference type="PANTHER" id="PTHR22854:SF2">
    <property type="entry name" value="INDOLE-3-GLYCEROL-PHOSPHATE SYNTHASE"/>
    <property type="match status" value="1"/>
</dbReference>
<dbReference type="PANTHER" id="PTHR22854">
    <property type="entry name" value="TRYPTOPHAN BIOSYNTHESIS PROTEIN"/>
    <property type="match status" value="1"/>
</dbReference>
<dbReference type="Pfam" id="PF00218">
    <property type="entry name" value="IGPS"/>
    <property type="match status" value="1"/>
</dbReference>
<dbReference type="SUPFAM" id="SSF51366">
    <property type="entry name" value="Ribulose-phoshate binding barrel"/>
    <property type="match status" value="1"/>
</dbReference>
<dbReference type="PROSITE" id="PS00614">
    <property type="entry name" value="IGPS"/>
    <property type="match status" value="1"/>
</dbReference>